<dbReference type="EMBL" id="L09206">
    <property type="protein sequence ID" value="AAA02762.1"/>
    <property type="molecule type" value="Genomic_RNA"/>
</dbReference>
<dbReference type="EMBL" id="L09207">
    <property type="protein sequence ID" value="AAA02764.1"/>
    <property type="molecule type" value="mRNA"/>
</dbReference>
<dbReference type="PIR" id="T02768">
    <property type="entry name" value="T02768"/>
</dbReference>
<dbReference type="RefSeq" id="YP_009177242.1">
    <property type="nucleotide sequence ID" value="NC_028246.1"/>
</dbReference>
<dbReference type="GeneID" id="26123212"/>
<dbReference type="KEGG" id="vg:26123212"/>
<dbReference type="OrthoDB" id="21147at10239"/>
<dbReference type="GO" id="GO:0016020">
    <property type="term" value="C:membrane"/>
    <property type="evidence" value="ECO:0007669"/>
    <property type="project" value="UniProtKB-KW"/>
</dbReference>
<dbReference type="GO" id="GO:0019031">
    <property type="term" value="C:viral envelope"/>
    <property type="evidence" value="ECO:0007669"/>
    <property type="project" value="UniProtKB-KW"/>
</dbReference>
<dbReference type="GO" id="GO:0055036">
    <property type="term" value="C:virion membrane"/>
    <property type="evidence" value="ECO:0007669"/>
    <property type="project" value="UniProtKB-SubCell"/>
</dbReference>
<dbReference type="GO" id="GO:0046718">
    <property type="term" value="P:symbiont entry into host cell"/>
    <property type="evidence" value="ECO:0007669"/>
    <property type="project" value="UniProtKB-KW"/>
</dbReference>
<dbReference type="GO" id="GO:0019062">
    <property type="term" value="P:virion attachment to host cell"/>
    <property type="evidence" value="ECO:0007669"/>
    <property type="project" value="UniProtKB-KW"/>
</dbReference>
<dbReference type="Gene3D" id="2.30.29.130">
    <property type="match status" value="1"/>
</dbReference>
<dbReference type="Gene3D" id="6.10.140.740">
    <property type="match status" value="1"/>
</dbReference>
<dbReference type="InterPro" id="IPR055447">
    <property type="entry name" value="Rhabdo_glycop_CD"/>
</dbReference>
<dbReference type="InterPro" id="IPR001903">
    <property type="entry name" value="Rhabdo_glycop_FD"/>
</dbReference>
<dbReference type="Pfam" id="PF24833">
    <property type="entry name" value="Rhabdo_glycop_CD"/>
    <property type="match status" value="1"/>
</dbReference>
<dbReference type="Pfam" id="PF00974">
    <property type="entry name" value="Rhabdo_glycop_FD"/>
    <property type="match status" value="1"/>
</dbReference>
<dbReference type="SUPFAM" id="SSF161008">
    <property type="entry name" value="Viral glycoprotein ectodomain-like"/>
    <property type="match status" value="1"/>
</dbReference>
<accession>Q89669</accession>
<name>GLYCO_ARV</name>
<keyword id="KW-0325">Glycoprotein</keyword>
<keyword id="KW-0945">Host-virus interaction</keyword>
<keyword id="KW-0472">Membrane</keyword>
<keyword id="KW-0732">Signal</keyword>
<keyword id="KW-0812">Transmembrane</keyword>
<keyword id="KW-1133">Transmembrane helix</keyword>
<keyword id="KW-1161">Viral attachment to host cell</keyword>
<keyword id="KW-0261">Viral envelope protein</keyword>
<keyword id="KW-0946">Virion</keyword>
<keyword id="KW-1160">Virus entry into host cell</keyword>
<reference key="1">
    <citation type="journal article" date="1993" name="Virology">
        <title>Adelaide river rhabdovirus expresses consecutive glycoprotein genes as polycistronic mRNAs: new evidence of gene duplication as an evolutionary process.</title>
        <authorList>
            <person name="Wang Y."/>
            <person name="Walker P.J."/>
        </authorList>
    </citation>
    <scope>NUCLEOTIDE SEQUENCE [GENOMIC RNA / MRNA]</scope>
</reference>
<sequence>MATFKVLVLMILWITSIFNVRCEKFVTIPVNCSGEVDIDKMDVMCPNRYNLLSTNHLMEGEEVETFCRPSLRENDLLDGYLCRKQKWEVTCTETWYFVTDVKYQIIEVIPTENECMEERERKLKGEYIPPYYPPTNCVWNAIDTQERTFITLIEHPVIEDPVTMTLMDSKFTKPCNPKHNEVTICDTYNPLIKWISKETSGLNLHCQIKSWECIPVKLHHSHRNMMEALYLESPDFGIVDASKICNLTFCGYNGILLDNGEWWSIYRSGFTHGFLDNHILKNRRIEECKEKKPGYKLAKLDTTYIDLEFEIELEHEKCLGTLEKLQNGEYVTPLDLSYLSPSNPGKHYAYRLEYINTTEHKCVQLGFTYEGGDCRKMLDERDDHGAYYNWTTIKLQRVIRAVCYYHTFSMNLDESKHKYYDQDNRSIQIDEKFISEVLKSTPLIDRHEKYEGNLSWNGIIIESKNGHEKNVIVPSASQYNHVMINKILKRLDTVMYDSYKFDSESGSISYNKIVPIVREDNLQNAHRVDVIQYIKDKGSYIINGFTGWFSSLGKLMRWTIWGVGLFFSIFTLYKIIMILRKHSNDNVRKEFKETAGKVMIGQPIDTKSMSRTSIKANNKGKFDKVKDLFTPRSKTISHLTTDTLKEHTDGTYEELHFFNV</sequence>
<organism>
    <name type="scientific">Adelaide River virus</name>
    <name type="common">ARV</name>
    <dbReference type="NCBI Taxonomy" id="31612"/>
    <lineage>
        <taxon>Viruses</taxon>
        <taxon>Riboviria</taxon>
        <taxon>Orthornavirae</taxon>
        <taxon>Negarnaviricota</taxon>
        <taxon>Haploviricotina</taxon>
        <taxon>Monjiviricetes</taxon>
        <taxon>Mononegavirales</taxon>
        <taxon>Rhabdoviridae</taxon>
        <taxon>Alpharhabdovirinae</taxon>
        <taxon>Ephemerovirus</taxon>
        <taxon>Ephemerovirus adelaide</taxon>
    </lineage>
</organism>
<protein>
    <recommendedName>
        <fullName>Glycoprotein</fullName>
    </recommendedName>
</protein>
<evidence type="ECO:0000250" key="1"/>
<evidence type="ECO:0000255" key="2"/>
<evidence type="ECO:0000305" key="3"/>
<feature type="signal peptide" evidence="2">
    <location>
        <begin position="1"/>
        <end position="22"/>
    </location>
</feature>
<feature type="chain" id="PRO_0000299235" description="Glycoprotein">
    <location>
        <begin position="23"/>
        <end position="660"/>
    </location>
</feature>
<feature type="topological domain" description="Virion surface" evidence="2">
    <location>
        <begin position="23"/>
        <end position="558"/>
    </location>
</feature>
<feature type="transmembrane region" description="Helical" evidence="2">
    <location>
        <begin position="559"/>
        <end position="579"/>
    </location>
</feature>
<feature type="topological domain" description="Intravirion" evidence="2">
    <location>
        <begin position="580"/>
        <end position="660"/>
    </location>
</feature>
<proteinExistence type="evidence at transcript level"/>
<comment type="function">
    <text evidence="1">Attaches the virus to host cellular receptor, inducing endocytosis of the virion. In the endosome, the acidic pH induces conformational changes in the glycoprotein trimer, which trigger fusion between virus and cell membrane (By similarity).</text>
</comment>
<comment type="subunit">
    <text evidence="1">Homotrimer. Interacts with matrix protein (By similarity).</text>
</comment>
<comment type="subcellular location">
    <subcellularLocation>
        <location evidence="1">Virion membrane</location>
        <topology evidence="1">Single-pass type I membrane protein</topology>
    </subcellularLocation>
</comment>
<comment type="PTM">
    <text evidence="1">Glycosylated by host. Glycosylation is crucial for glycoprotein export at the cell surface (By similarity).</text>
</comment>
<comment type="similarity">
    <text evidence="3">Belongs to the ephemerovirus glycoprotein family.</text>
</comment>
<organismHost>
    <name type="scientific">Bos taurus</name>
    <name type="common">Bovine</name>
    <dbReference type="NCBI Taxonomy" id="9913"/>
</organismHost>
<organismHost>
    <name type="scientific">Bubalus bubalis</name>
    <name type="common">Domestic water buffalo</name>
    <dbReference type="NCBI Taxonomy" id="89462"/>
</organismHost>
<organismHost>
    <name type="scientific">Culicoides</name>
    <dbReference type="NCBI Taxonomy" id="58271"/>
</organismHost>
<organismHost>
    <name type="scientific">Syncerus caffer</name>
    <name type="common">African buffalo</name>
    <dbReference type="NCBI Taxonomy" id="9970"/>
</organismHost>
<gene>
    <name type="primary">G</name>
</gene>